<comment type="function">
    <text evidence="1">Involved in the biosynthesis of A factor (2-isocapryloyl-3R-hydroxymethyl-gamma-butyrolactone), a gamma-butyrolactone autoregulator that triggers secondary metabolism and morphogenesis in Streptomyces (By similarity). Catalyzes beta-ketoacyl transfer from 8-methyl-3-oxononanoyl-acyl carrier protein (ACP) to the hydroxyl group of dihydroxyacetone phosphate (DHAP), thus producing an 8-methyl-3-oxononanoyl-DHAP ester (By similarity).</text>
</comment>
<comment type="catalytic activity">
    <reaction evidence="1">
        <text>a medium-chain 3-oxoacyl-[ACP] + dihydroxyacetone phosphate = a (4-alkanoyl-5-oxo-2,5-dihydrofuran-3-yl)methyl phosphate + holo-[ACP] + H2O</text>
        <dbReference type="Rhea" id="RHEA:84095"/>
        <dbReference type="Rhea" id="RHEA-COMP:9685"/>
        <dbReference type="Rhea" id="RHEA-COMP:14764"/>
        <dbReference type="ChEBI" id="CHEBI:15377"/>
        <dbReference type="ChEBI" id="CHEBI:57642"/>
        <dbReference type="ChEBI" id="CHEBI:64479"/>
        <dbReference type="ChEBI" id="CHEBI:138603"/>
        <dbReference type="ChEBI" id="CHEBI:141052"/>
        <dbReference type="EC" id="2.3.1.277"/>
    </reaction>
</comment>
<comment type="similarity">
    <text evidence="3">Belongs to the AfsA family.</text>
</comment>
<feature type="chain" id="PRO_0000064486" description="2-oxo-3-(phosphooxy)propyl 3-oxoalkanoate synthase">
    <location>
        <begin position="1"/>
        <end position="301"/>
    </location>
</feature>
<protein>
    <recommendedName>
        <fullName evidence="1">2-oxo-3-(phosphooxy)propyl 3-oxoalkanoate synthase</fullName>
        <ecNumber evidence="1">2.3.1.277</ecNumber>
    </recommendedName>
    <alternativeName>
        <fullName evidence="3">A-factor biosynthesis enzyme</fullName>
    </alternativeName>
</protein>
<evidence type="ECO:0000250" key="1">
    <source>
        <dbReference type="UniProtKB" id="B1VN93"/>
    </source>
</evidence>
<evidence type="ECO:0000303" key="2">
    <source>
    </source>
</evidence>
<evidence type="ECO:0000305" key="3"/>
<proteinExistence type="inferred from homology"/>
<gene>
    <name evidence="2" type="primary">afsA</name>
</gene>
<dbReference type="EC" id="2.3.1.277" evidence="1"/>
<dbReference type="EMBL" id="M24250">
    <property type="protein sequence ID" value="AAA26693.1"/>
    <property type="molecule type" value="Genomic_DNA"/>
</dbReference>
<dbReference type="EMBL" id="AB011413">
    <property type="protein sequence ID" value="BAA32134.1"/>
    <property type="molecule type" value="Genomic_DNA"/>
</dbReference>
<dbReference type="PIR" id="A32061">
    <property type="entry name" value="A32061"/>
</dbReference>
<dbReference type="SMR" id="P18394"/>
<dbReference type="BioCyc" id="MetaCyc:MONOMER-20192"/>
<dbReference type="BRENDA" id="2.3.1.277">
    <property type="organism ID" value="6035"/>
</dbReference>
<dbReference type="GO" id="GO:0016740">
    <property type="term" value="F:transferase activity"/>
    <property type="evidence" value="ECO:0007669"/>
    <property type="project" value="UniProtKB-KW"/>
</dbReference>
<dbReference type="InterPro" id="IPR047757">
    <property type="entry name" value="AfsA-like"/>
</dbReference>
<dbReference type="InterPro" id="IPR005509">
    <property type="entry name" value="AfsA_hotdog_dom"/>
</dbReference>
<dbReference type="InterPro" id="IPR029069">
    <property type="entry name" value="HotDog_dom_sf"/>
</dbReference>
<dbReference type="NCBIfam" id="NF041195">
    <property type="entry name" value="ScbA_BarX_GamBu"/>
    <property type="match status" value="1"/>
</dbReference>
<dbReference type="Pfam" id="PF03756">
    <property type="entry name" value="AfsA"/>
    <property type="match status" value="2"/>
</dbReference>
<dbReference type="SUPFAM" id="SSF54637">
    <property type="entry name" value="Thioesterase/thiol ester dehydrase-isomerase"/>
    <property type="match status" value="1"/>
</dbReference>
<name>AFSA_STRGR</name>
<accession>P18394</accession>
<reference key="1">
    <citation type="journal article" date="1989" name="J. Bacteriol.">
        <title>Nucleotide sequence and transcriptional analysis of the Streptomyces griseus gene (afsA) responsible for A-factor biosynthesis.</title>
        <authorList>
            <person name="Horinouchi S."/>
            <person name="Suzuki H."/>
            <person name="Nishiyama M."/>
            <person name="Beppu T."/>
        </authorList>
    </citation>
    <scope>NUCLEOTIDE SEQUENCE [GENOMIC DNA]</scope>
</reference>
<reference key="2">
    <citation type="submission" date="1998-02" db="EMBL/GenBank/DDBJ databases">
        <authorList>
            <person name="Umeyama T."/>
        </authorList>
    </citation>
    <scope>NUCLEOTIDE SEQUENCE [GENOMIC DNA]</scope>
</reference>
<sequence length="301" mass="32706">MDAEAEVVHPVGIEMVHRTRPEDAFPRNWVRLGRDRFAVEAVLPHDHPFFAPVGDDLHDPLLVAEAMRQAAMLAFHAGYGIPLGYHFLLTELDYVCHPEHLGVGGEPTEIGLEVFCSDLKWRAGLPAQGRVGWAVHRGDRLAATGVAATRFSTPKAYRRMRGDVPVEGISLPETAPVPASPAGRARVEDVVLSGTGREGVWELRVDTRHPTLFQRPNDHVPGMLLLEAARQAACLVAGPAGIVPVEARTRFHRYSEFGSPCWIGAVVQPGADEDTVTVRVTGHQDGETVFSTVLSGPRAHG</sequence>
<organism>
    <name type="scientific">Streptomyces griseus</name>
    <dbReference type="NCBI Taxonomy" id="1911"/>
    <lineage>
        <taxon>Bacteria</taxon>
        <taxon>Bacillati</taxon>
        <taxon>Actinomycetota</taxon>
        <taxon>Actinomycetes</taxon>
        <taxon>Kitasatosporales</taxon>
        <taxon>Streptomycetaceae</taxon>
        <taxon>Streptomyces</taxon>
    </lineage>
</organism>
<keyword id="KW-0614">Plasmid</keyword>
<keyword id="KW-0808">Transferase</keyword>